<accession>A8AAU3</accession>
<protein>
    <recommendedName>
        <fullName evidence="1">Small ribosomal subunit protein eS1</fullName>
    </recommendedName>
    <alternativeName>
        <fullName evidence="2">30S ribosomal protein S3Ae</fullName>
    </alternativeName>
    <alternativeName>
        <fullName evidence="1">Ribosomal protein S1e</fullName>
    </alternativeName>
</protein>
<dbReference type="EMBL" id="CP000816">
    <property type="protein sequence ID" value="ABU82045.1"/>
    <property type="molecule type" value="Genomic_DNA"/>
</dbReference>
<dbReference type="RefSeq" id="WP_012123009.1">
    <property type="nucleotide sequence ID" value="NC_009776.1"/>
</dbReference>
<dbReference type="SMR" id="A8AAU3"/>
<dbReference type="STRING" id="453591.Igni_0863"/>
<dbReference type="GeneID" id="5562420"/>
<dbReference type="KEGG" id="iho:Igni_0863"/>
<dbReference type="eggNOG" id="arCOG04186">
    <property type="taxonomic scope" value="Archaea"/>
</dbReference>
<dbReference type="HOGENOM" id="CLU_062507_1_0_2"/>
<dbReference type="OrthoDB" id="30639at2157"/>
<dbReference type="PhylomeDB" id="A8AAU3"/>
<dbReference type="Proteomes" id="UP000000262">
    <property type="component" value="Chromosome"/>
</dbReference>
<dbReference type="GO" id="GO:1990904">
    <property type="term" value="C:ribonucleoprotein complex"/>
    <property type="evidence" value="ECO:0007669"/>
    <property type="project" value="UniProtKB-KW"/>
</dbReference>
<dbReference type="GO" id="GO:0005840">
    <property type="term" value="C:ribosome"/>
    <property type="evidence" value="ECO:0007669"/>
    <property type="project" value="UniProtKB-KW"/>
</dbReference>
<dbReference type="GO" id="GO:0003735">
    <property type="term" value="F:structural constituent of ribosome"/>
    <property type="evidence" value="ECO:0007669"/>
    <property type="project" value="InterPro"/>
</dbReference>
<dbReference type="GO" id="GO:0006412">
    <property type="term" value="P:translation"/>
    <property type="evidence" value="ECO:0007669"/>
    <property type="project" value="UniProtKB-UniRule"/>
</dbReference>
<dbReference type="HAMAP" id="MF_00359">
    <property type="entry name" value="Ribosomal_eS1"/>
    <property type="match status" value="1"/>
</dbReference>
<dbReference type="InterPro" id="IPR001593">
    <property type="entry name" value="Ribosomal_eS1"/>
</dbReference>
<dbReference type="InterPro" id="IPR030838">
    <property type="entry name" value="Ribosomal_eS1_arc"/>
</dbReference>
<dbReference type="NCBIfam" id="NF003142">
    <property type="entry name" value="PRK04057.1"/>
    <property type="match status" value="1"/>
</dbReference>
<dbReference type="Pfam" id="PF01015">
    <property type="entry name" value="Ribosomal_S3Ae"/>
    <property type="match status" value="1"/>
</dbReference>
<dbReference type="SMART" id="SM01397">
    <property type="entry name" value="Ribosomal_S3Ae"/>
    <property type="match status" value="1"/>
</dbReference>
<evidence type="ECO:0000255" key="1">
    <source>
        <dbReference type="HAMAP-Rule" id="MF_00359"/>
    </source>
</evidence>
<evidence type="ECO:0000305" key="2"/>
<comment type="similarity">
    <text evidence="1">Belongs to the eukaryotic ribosomal protein eS1 family.</text>
</comment>
<organism>
    <name type="scientific">Ignicoccus hospitalis (strain KIN4/I / DSM 18386 / JCM 14125)</name>
    <dbReference type="NCBI Taxonomy" id="453591"/>
    <lineage>
        <taxon>Archaea</taxon>
        <taxon>Thermoproteota</taxon>
        <taxon>Thermoprotei</taxon>
        <taxon>Desulfurococcales</taxon>
        <taxon>Desulfurococcaceae</taxon>
        <taxon>Ignicoccus</taxon>
    </lineage>
</organism>
<feature type="chain" id="PRO_1000005190" description="Small ribosomal subunit protein eS1">
    <location>
        <begin position="1"/>
        <end position="212"/>
    </location>
</feature>
<sequence>MSARRRGALKDKWKIKKWYEIITPDVFNNVSVGQTPADEAWKLIGRTVDTTLYDITGDFTYVHVHVYLQINKVDEEALKAYTIFKGHELARDYIRSLTRRKSSKIEGIFDVWTKDGYGLRITVDTFTAYRCQTSQKRAIRKIQKEVIEEMVPQMTLDEVINAMLFGDIAEEISNRARKIYPIRRTEIYKSKVLYMPSPEGPIKAVIVPKPPA</sequence>
<reference key="1">
    <citation type="journal article" date="2008" name="Genome Biol.">
        <title>A genomic analysis of the archaeal system Ignicoccus hospitalis-Nanoarchaeum equitans.</title>
        <authorList>
            <person name="Podar M."/>
            <person name="Anderson I."/>
            <person name="Makarova K.S."/>
            <person name="Elkins J.G."/>
            <person name="Ivanova N."/>
            <person name="Wall M.A."/>
            <person name="Lykidis A."/>
            <person name="Mavromatis K."/>
            <person name="Sun H."/>
            <person name="Hudson M.E."/>
            <person name="Chen W."/>
            <person name="Deciu C."/>
            <person name="Hutchison D."/>
            <person name="Eads J.R."/>
            <person name="Anderson A."/>
            <person name="Fernandes F."/>
            <person name="Szeto E."/>
            <person name="Lapidus A."/>
            <person name="Kyrpides N.C."/>
            <person name="Saier M.H. Jr."/>
            <person name="Richardson P.M."/>
            <person name="Rachel R."/>
            <person name="Huber H."/>
            <person name="Eisen J.A."/>
            <person name="Koonin E.V."/>
            <person name="Keller M."/>
            <person name="Stetter K.O."/>
        </authorList>
    </citation>
    <scope>NUCLEOTIDE SEQUENCE [LARGE SCALE GENOMIC DNA]</scope>
    <source>
        <strain>KIN4/I / DSM 18386 / JCM 14125</strain>
    </source>
</reference>
<keyword id="KW-1185">Reference proteome</keyword>
<keyword id="KW-0687">Ribonucleoprotein</keyword>
<keyword id="KW-0689">Ribosomal protein</keyword>
<gene>
    <name evidence="1" type="primary">rps3ae</name>
    <name type="ordered locus">Igni_0863</name>
</gene>
<name>RS3A_IGNH4</name>
<proteinExistence type="inferred from homology"/>